<sequence>MTPQLNNLTLPIYMDYQATTPIDPRVMEAMLPYFTTKFGNPHSRSHSFGWEAENAVEEARSMVAKLIGADTKEIIFTSGATESNNLAIKGIAKFYSNKKNHIITVVSEHKCVLDACRHLEQEGIKITYLPIKPNGIIDLETLKNAITDQTMLVSVMVVNNEIGVVQPLKEIGKICREKGVFFHSDIAQGFGKIPIDVNAFNIDLASISGHKIYGPKGIGALYVRKKPRVRITPLINGGGQERGMRSGTLPTPLIVGLGMAAEIAYSEMEKDTKHVNYLFDRFLNNIHKRISEVYLNGDKNQRYKGNLNLSFAGVEGESMILAIKDLAVSSGSACTSASLEPSYVLRSIGIGEELAHTAIRFGIGRFTTEQEVDYAVNLICSKIDKLRALSPLWEMMQEGIDLKKIKWAVH</sequence>
<keyword id="KW-0001">2Fe-2S</keyword>
<keyword id="KW-0963">Cytoplasm</keyword>
<keyword id="KW-0408">Iron</keyword>
<keyword id="KW-0411">Iron-sulfur</keyword>
<keyword id="KW-0479">Metal-binding</keyword>
<keyword id="KW-0663">Pyridoxal phosphate</keyword>
<keyword id="KW-0808">Transferase</keyword>
<accession>B0BXX6</accession>
<gene>
    <name evidence="1" type="primary">iscS</name>
    <name type="ordered locus">RrIowa_0868</name>
</gene>
<protein>
    <recommendedName>
        <fullName evidence="1">Cysteine desulfurase IscS</fullName>
        <ecNumber evidence="1">2.8.1.7</ecNumber>
    </recommendedName>
</protein>
<evidence type="ECO:0000255" key="1">
    <source>
        <dbReference type="HAMAP-Rule" id="MF_00331"/>
    </source>
</evidence>
<comment type="function">
    <text evidence="1">Master enzyme that delivers sulfur to a number of partners involved in Fe-S cluster assembly, tRNA modification or cofactor biosynthesis. Catalyzes the removal of elemental sulfur atoms from cysteine to produce alanine. Functions as a sulfur delivery protein for Fe-S cluster synthesis onto IscU, an Fe-S scaffold assembly protein, as well as other S acceptor proteins.</text>
</comment>
<comment type="catalytic activity">
    <reaction evidence="1">
        <text>(sulfur carrier)-H + L-cysteine = (sulfur carrier)-SH + L-alanine</text>
        <dbReference type="Rhea" id="RHEA:43892"/>
        <dbReference type="Rhea" id="RHEA-COMP:14737"/>
        <dbReference type="Rhea" id="RHEA-COMP:14739"/>
        <dbReference type="ChEBI" id="CHEBI:29917"/>
        <dbReference type="ChEBI" id="CHEBI:35235"/>
        <dbReference type="ChEBI" id="CHEBI:57972"/>
        <dbReference type="ChEBI" id="CHEBI:64428"/>
        <dbReference type="EC" id="2.8.1.7"/>
    </reaction>
</comment>
<comment type="cofactor">
    <cofactor evidence="1">
        <name>pyridoxal 5'-phosphate</name>
        <dbReference type="ChEBI" id="CHEBI:597326"/>
    </cofactor>
</comment>
<comment type="pathway">
    <text evidence="1">Cofactor biosynthesis; iron-sulfur cluster biosynthesis.</text>
</comment>
<comment type="subunit">
    <text evidence="1">Homodimer. Forms a heterotetramer with IscU, interacts with other sulfur acceptors.</text>
</comment>
<comment type="subcellular location">
    <subcellularLocation>
        <location evidence="1">Cytoplasm</location>
    </subcellularLocation>
</comment>
<comment type="similarity">
    <text evidence="1">Belongs to the class-V pyridoxal-phosphate-dependent aminotransferase family. NifS/IscS subfamily.</text>
</comment>
<reference key="1">
    <citation type="journal article" date="2008" name="Infect. Immun.">
        <title>Genomic comparison of virulent Rickettsia rickettsii Sheila Smith and avirulent Rickettsia rickettsii Iowa.</title>
        <authorList>
            <person name="Ellison D.W."/>
            <person name="Clark T.R."/>
            <person name="Sturdevant D.E."/>
            <person name="Virtaneva K."/>
            <person name="Porcella S.F."/>
            <person name="Hackstadt T."/>
        </authorList>
    </citation>
    <scope>NUCLEOTIDE SEQUENCE [LARGE SCALE GENOMIC DNA]</scope>
    <source>
        <strain>Iowa</strain>
    </source>
</reference>
<dbReference type="EC" id="2.8.1.7" evidence="1"/>
<dbReference type="EMBL" id="CP000766">
    <property type="protein sequence ID" value="ABY72702.1"/>
    <property type="molecule type" value="Genomic_DNA"/>
</dbReference>
<dbReference type="RefSeq" id="WP_012150913.1">
    <property type="nucleotide sequence ID" value="NC_010263.3"/>
</dbReference>
<dbReference type="SMR" id="B0BXX6"/>
<dbReference type="KEGG" id="rrj:RrIowa_0868"/>
<dbReference type="eggNOG" id="COG1104">
    <property type="taxonomic scope" value="Bacteria"/>
</dbReference>
<dbReference type="HOGENOM" id="CLU_003433_0_2_5"/>
<dbReference type="UniPathway" id="UPA00266"/>
<dbReference type="Proteomes" id="UP000000796">
    <property type="component" value="Chromosome"/>
</dbReference>
<dbReference type="GO" id="GO:1990221">
    <property type="term" value="C:L-cysteine desulfurase complex"/>
    <property type="evidence" value="ECO:0007669"/>
    <property type="project" value="UniProtKB-ARBA"/>
</dbReference>
<dbReference type="GO" id="GO:0051537">
    <property type="term" value="F:2 iron, 2 sulfur cluster binding"/>
    <property type="evidence" value="ECO:0007669"/>
    <property type="project" value="UniProtKB-UniRule"/>
</dbReference>
<dbReference type="GO" id="GO:0031071">
    <property type="term" value="F:cysteine desulfurase activity"/>
    <property type="evidence" value="ECO:0007669"/>
    <property type="project" value="UniProtKB-UniRule"/>
</dbReference>
<dbReference type="GO" id="GO:0046872">
    <property type="term" value="F:metal ion binding"/>
    <property type="evidence" value="ECO:0007669"/>
    <property type="project" value="UniProtKB-KW"/>
</dbReference>
<dbReference type="GO" id="GO:0030170">
    <property type="term" value="F:pyridoxal phosphate binding"/>
    <property type="evidence" value="ECO:0007669"/>
    <property type="project" value="UniProtKB-UniRule"/>
</dbReference>
<dbReference type="GO" id="GO:0044571">
    <property type="term" value="P:[2Fe-2S] cluster assembly"/>
    <property type="evidence" value="ECO:0007669"/>
    <property type="project" value="UniProtKB-UniRule"/>
</dbReference>
<dbReference type="FunFam" id="3.40.640.10:FF:000003">
    <property type="entry name" value="Cysteine desulfurase IscS"/>
    <property type="match status" value="1"/>
</dbReference>
<dbReference type="FunFam" id="3.90.1150.10:FF:000002">
    <property type="entry name" value="Cysteine desulfurase IscS"/>
    <property type="match status" value="1"/>
</dbReference>
<dbReference type="Gene3D" id="3.90.1150.10">
    <property type="entry name" value="Aspartate Aminotransferase, domain 1"/>
    <property type="match status" value="1"/>
</dbReference>
<dbReference type="Gene3D" id="3.40.640.10">
    <property type="entry name" value="Type I PLP-dependent aspartate aminotransferase-like (Major domain)"/>
    <property type="match status" value="1"/>
</dbReference>
<dbReference type="HAMAP" id="MF_00331">
    <property type="entry name" value="Cys_desulf_IscS"/>
    <property type="match status" value="1"/>
</dbReference>
<dbReference type="InterPro" id="IPR000192">
    <property type="entry name" value="Aminotrans_V_dom"/>
</dbReference>
<dbReference type="InterPro" id="IPR020578">
    <property type="entry name" value="Aminotrans_V_PyrdxlP_BS"/>
</dbReference>
<dbReference type="InterPro" id="IPR010240">
    <property type="entry name" value="Cys_deSase_IscS"/>
</dbReference>
<dbReference type="InterPro" id="IPR016454">
    <property type="entry name" value="Cysteine_dSase"/>
</dbReference>
<dbReference type="InterPro" id="IPR015424">
    <property type="entry name" value="PyrdxlP-dep_Trfase"/>
</dbReference>
<dbReference type="InterPro" id="IPR015421">
    <property type="entry name" value="PyrdxlP-dep_Trfase_major"/>
</dbReference>
<dbReference type="InterPro" id="IPR015422">
    <property type="entry name" value="PyrdxlP-dep_Trfase_small"/>
</dbReference>
<dbReference type="NCBIfam" id="TIGR02006">
    <property type="entry name" value="IscS"/>
    <property type="match status" value="1"/>
</dbReference>
<dbReference type="NCBIfam" id="NF002806">
    <property type="entry name" value="PRK02948.1"/>
    <property type="match status" value="1"/>
</dbReference>
<dbReference type="NCBIfam" id="NF010611">
    <property type="entry name" value="PRK14012.1"/>
    <property type="match status" value="1"/>
</dbReference>
<dbReference type="PANTHER" id="PTHR11601:SF34">
    <property type="entry name" value="CYSTEINE DESULFURASE"/>
    <property type="match status" value="1"/>
</dbReference>
<dbReference type="PANTHER" id="PTHR11601">
    <property type="entry name" value="CYSTEINE DESULFURYLASE FAMILY MEMBER"/>
    <property type="match status" value="1"/>
</dbReference>
<dbReference type="Pfam" id="PF00266">
    <property type="entry name" value="Aminotran_5"/>
    <property type="match status" value="1"/>
</dbReference>
<dbReference type="PIRSF" id="PIRSF005572">
    <property type="entry name" value="NifS"/>
    <property type="match status" value="1"/>
</dbReference>
<dbReference type="SUPFAM" id="SSF53383">
    <property type="entry name" value="PLP-dependent transferases"/>
    <property type="match status" value="1"/>
</dbReference>
<dbReference type="PROSITE" id="PS00595">
    <property type="entry name" value="AA_TRANSFER_CLASS_5"/>
    <property type="match status" value="1"/>
</dbReference>
<proteinExistence type="inferred from homology"/>
<organism>
    <name type="scientific">Rickettsia rickettsii (strain Iowa)</name>
    <dbReference type="NCBI Taxonomy" id="452659"/>
    <lineage>
        <taxon>Bacteria</taxon>
        <taxon>Pseudomonadati</taxon>
        <taxon>Pseudomonadota</taxon>
        <taxon>Alphaproteobacteria</taxon>
        <taxon>Rickettsiales</taxon>
        <taxon>Rickettsiaceae</taxon>
        <taxon>Rickettsieae</taxon>
        <taxon>Rickettsia</taxon>
        <taxon>spotted fever group</taxon>
    </lineage>
</organism>
<name>ISCS_RICRO</name>
<feature type="chain" id="PRO_1000079208" description="Cysteine desulfurase IscS">
    <location>
        <begin position="1"/>
        <end position="410"/>
    </location>
</feature>
<feature type="active site" description="Cysteine persulfide intermediate" evidence="1">
    <location>
        <position position="334"/>
    </location>
</feature>
<feature type="binding site" evidence="1">
    <location>
        <begin position="80"/>
        <end position="81"/>
    </location>
    <ligand>
        <name>pyridoxal 5'-phosphate</name>
        <dbReference type="ChEBI" id="CHEBI:597326"/>
    </ligand>
</feature>
<feature type="binding site" evidence="1">
    <location>
        <position position="160"/>
    </location>
    <ligand>
        <name>pyridoxal 5'-phosphate</name>
        <dbReference type="ChEBI" id="CHEBI:597326"/>
    </ligand>
</feature>
<feature type="binding site" evidence="1">
    <location>
        <position position="188"/>
    </location>
    <ligand>
        <name>pyridoxal 5'-phosphate</name>
        <dbReference type="ChEBI" id="CHEBI:597326"/>
    </ligand>
</feature>
<feature type="binding site" evidence="1">
    <location>
        <begin position="208"/>
        <end position="210"/>
    </location>
    <ligand>
        <name>pyridoxal 5'-phosphate</name>
        <dbReference type="ChEBI" id="CHEBI:597326"/>
    </ligand>
</feature>
<feature type="binding site" evidence="1">
    <location>
        <position position="248"/>
    </location>
    <ligand>
        <name>pyridoxal 5'-phosphate</name>
        <dbReference type="ChEBI" id="CHEBI:597326"/>
    </ligand>
</feature>
<feature type="binding site" description="via persulfide group" evidence="1">
    <location>
        <position position="334"/>
    </location>
    <ligand>
        <name>[2Fe-2S] cluster</name>
        <dbReference type="ChEBI" id="CHEBI:190135"/>
        <note>ligand shared with IscU</note>
    </ligand>
</feature>
<feature type="modified residue" description="N6-(pyridoxal phosphate)lysine" evidence="1">
    <location>
        <position position="211"/>
    </location>
</feature>